<accession>C1KWT0</accession>
<keyword id="KW-0028">Amino-acid biosynthesis</keyword>
<keyword id="KW-0100">Branched-chain amino acid biosynthesis</keyword>
<keyword id="KW-0460">Magnesium</keyword>
<keyword id="KW-0479">Metal-binding</keyword>
<keyword id="KW-0521">NADP</keyword>
<keyword id="KW-0560">Oxidoreductase</keyword>
<reference key="1">
    <citation type="journal article" date="2012" name="BMC Genomics">
        <title>Comparative genomics and transcriptomics of lineages I, II, and III strains of Listeria monocytogenes.</title>
        <authorList>
            <person name="Hain T."/>
            <person name="Ghai R."/>
            <person name="Billion A."/>
            <person name="Kuenne C.T."/>
            <person name="Steinweg C."/>
            <person name="Izar B."/>
            <person name="Mohamed W."/>
            <person name="Mraheil M."/>
            <person name="Domann E."/>
            <person name="Schaffrath S."/>
            <person name="Karst U."/>
            <person name="Goesmann A."/>
            <person name="Oehm S."/>
            <person name="Puhler A."/>
            <person name="Merkl R."/>
            <person name="Vorwerk S."/>
            <person name="Glaser P."/>
            <person name="Garrido P."/>
            <person name="Rusniok C."/>
            <person name="Buchrieser C."/>
            <person name="Goebel W."/>
            <person name="Chakraborty T."/>
        </authorList>
    </citation>
    <scope>NUCLEOTIDE SEQUENCE [LARGE SCALE GENOMIC DNA]</scope>
    <source>
        <strain>CLIP80459</strain>
    </source>
</reference>
<sequence>MTKVYYEDAVKNNALEGKTVAVIGYGSQGHAHSQNLRDNGNNVIIGIREGKSAESARNDGFDVYSVSEAAEKADVIMILLPDETQGETYENEIKPNLKAGNALVFAHGFNIHFDVINPPSDVDVFLVAPKGPGHLVRRTFVEGGAVPSLFAIYQDATGNARDTALSYAKGIGATRAGVIETTFKEETETDLFGEQAVLCGGATHLIQAGFETLVEAGYQPELAYFEVLHEMKLIVDLMYEGGMEKMRHSISNTAEYGDYVSGPRVVTADTKKAMKEVLTDIQNGNFAKSFIDDNKNGFKEFHRMRKEQQGHQIEKVGAELREMMPFVKPQH</sequence>
<feature type="chain" id="PRO_1000206084" description="Ketol-acid reductoisomerase (NADP(+))">
    <location>
        <begin position="1"/>
        <end position="331"/>
    </location>
</feature>
<feature type="domain" description="KARI N-terminal Rossmann" evidence="2">
    <location>
        <begin position="2"/>
        <end position="181"/>
    </location>
</feature>
<feature type="domain" description="KARI C-terminal knotted" evidence="3">
    <location>
        <begin position="182"/>
        <end position="327"/>
    </location>
</feature>
<feature type="active site" evidence="1">
    <location>
        <position position="107"/>
    </location>
</feature>
<feature type="binding site" evidence="1">
    <location>
        <begin position="25"/>
        <end position="28"/>
    </location>
    <ligand>
        <name>NADP(+)</name>
        <dbReference type="ChEBI" id="CHEBI:58349"/>
    </ligand>
</feature>
<feature type="binding site" evidence="1">
    <location>
        <position position="48"/>
    </location>
    <ligand>
        <name>NADP(+)</name>
        <dbReference type="ChEBI" id="CHEBI:58349"/>
    </ligand>
</feature>
<feature type="binding site" evidence="1">
    <location>
        <position position="52"/>
    </location>
    <ligand>
        <name>NADP(+)</name>
        <dbReference type="ChEBI" id="CHEBI:58349"/>
    </ligand>
</feature>
<feature type="binding site" evidence="1">
    <location>
        <begin position="82"/>
        <end position="85"/>
    </location>
    <ligand>
        <name>NADP(+)</name>
        <dbReference type="ChEBI" id="CHEBI:58349"/>
    </ligand>
</feature>
<feature type="binding site" evidence="1">
    <location>
        <position position="133"/>
    </location>
    <ligand>
        <name>NADP(+)</name>
        <dbReference type="ChEBI" id="CHEBI:58349"/>
    </ligand>
</feature>
<feature type="binding site" evidence="1">
    <location>
        <position position="190"/>
    </location>
    <ligand>
        <name>Mg(2+)</name>
        <dbReference type="ChEBI" id="CHEBI:18420"/>
        <label>1</label>
    </ligand>
</feature>
<feature type="binding site" evidence="1">
    <location>
        <position position="190"/>
    </location>
    <ligand>
        <name>Mg(2+)</name>
        <dbReference type="ChEBI" id="CHEBI:18420"/>
        <label>2</label>
    </ligand>
</feature>
<feature type="binding site" evidence="1">
    <location>
        <position position="194"/>
    </location>
    <ligand>
        <name>Mg(2+)</name>
        <dbReference type="ChEBI" id="CHEBI:18420"/>
        <label>1</label>
    </ligand>
</feature>
<feature type="binding site" evidence="1">
    <location>
        <position position="226"/>
    </location>
    <ligand>
        <name>Mg(2+)</name>
        <dbReference type="ChEBI" id="CHEBI:18420"/>
        <label>2</label>
    </ligand>
</feature>
<feature type="binding site" evidence="1">
    <location>
        <position position="230"/>
    </location>
    <ligand>
        <name>Mg(2+)</name>
        <dbReference type="ChEBI" id="CHEBI:18420"/>
        <label>2</label>
    </ligand>
</feature>
<feature type="binding site" evidence="1">
    <location>
        <position position="251"/>
    </location>
    <ligand>
        <name>substrate</name>
    </ligand>
</feature>
<comment type="function">
    <text evidence="1">Involved in the biosynthesis of branched-chain amino acids (BCAA). Catalyzes an alkyl-migration followed by a ketol-acid reduction of (S)-2-acetolactate (S2AL) to yield (R)-2,3-dihydroxy-isovalerate. In the isomerase reaction, S2AL is rearranged via a Mg-dependent methyl migration to produce 3-hydroxy-3-methyl-2-ketobutyrate (HMKB). In the reductase reaction, this 2-ketoacid undergoes a metal-dependent reduction by NADPH to yield (R)-2,3-dihydroxy-isovalerate.</text>
</comment>
<comment type="catalytic activity">
    <reaction evidence="1">
        <text>(2R)-2,3-dihydroxy-3-methylbutanoate + NADP(+) = (2S)-2-acetolactate + NADPH + H(+)</text>
        <dbReference type="Rhea" id="RHEA:22068"/>
        <dbReference type="ChEBI" id="CHEBI:15378"/>
        <dbReference type="ChEBI" id="CHEBI:49072"/>
        <dbReference type="ChEBI" id="CHEBI:57783"/>
        <dbReference type="ChEBI" id="CHEBI:58349"/>
        <dbReference type="ChEBI" id="CHEBI:58476"/>
        <dbReference type="EC" id="1.1.1.86"/>
    </reaction>
</comment>
<comment type="catalytic activity">
    <reaction evidence="1">
        <text>(2R,3R)-2,3-dihydroxy-3-methylpentanoate + NADP(+) = (S)-2-ethyl-2-hydroxy-3-oxobutanoate + NADPH + H(+)</text>
        <dbReference type="Rhea" id="RHEA:13493"/>
        <dbReference type="ChEBI" id="CHEBI:15378"/>
        <dbReference type="ChEBI" id="CHEBI:49256"/>
        <dbReference type="ChEBI" id="CHEBI:49258"/>
        <dbReference type="ChEBI" id="CHEBI:57783"/>
        <dbReference type="ChEBI" id="CHEBI:58349"/>
        <dbReference type="EC" id="1.1.1.86"/>
    </reaction>
</comment>
<comment type="cofactor">
    <cofactor evidence="1">
        <name>Mg(2+)</name>
        <dbReference type="ChEBI" id="CHEBI:18420"/>
    </cofactor>
    <text evidence="1">Binds 2 magnesium ions per subunit.</text>
</comment>
<comment type="pathway">
    <text evidence="1">Amino-acid biosynthesis; L-isoleucine biosynthesis; L-isoleucine from 2-oxobutanoate: step 2/4.</text>
</comment>
<comment type="pathway">
    <text evidence="1">Amino-acid biosynthesis; L-valine biosynthesis; L-valine from pyruvate: step 2/4.</text>
</comment>
<comment type="similarity">
    <text evidence="1">Belongs to the ketol-acid reductoisomerase family.</text>
</comment>
<evidence type="ECO:0000255" key="1">
    <source>
        <dbReference type="HAMAP-Rule" id="MF_00435"/>
    </source>
</evidence>
<evidence type="ECO:0000255" key="2">
    <source>
        <dbReference type="PROSITE-ProRule" id="PRU01197"/>
    </source>
</evidence>
<evidence type="ECO:0000255" key="3">
    <source>
        <dbReference type="PROSITE-ProRule" id="PRU01198"/>
    </source>
</evidence>
<proteinExistence type="inferred from homology"/>
<organism>
    <name type="scientific">Listeria monocytogenes serotype 4b (strain CLIP80459)</name>
    <dbReference type="NCBI Taxonomy" id="568819"/>
    <lineage>
        <taxon>Bacteria</taxon>
        <taxon>Bacillati</taxon>
        <taxon>Bacillota</taxon>
        <taxon>Bacilli</taxon>
        <taxon>Bacillales</taxon>
        <taxon>Listeriaceae</taxon>
        <taxon>Listeria</taxon>
    </lineage>
</organism>
<name>ILVC_LISMC</name>
<protein>
    <recommendedName>
        <fullName evidence="1">Ketol-acid reductoisomerase (NADP(+))</fullName>
        <shortName evidence="1">KARI</shortName>
        <ecNumber evidence="1">1.1.1.86</ecNumber>
    </recommendedName>
    <alternativeName>
        <fullName evidence="1">Acetohydroxy-acid isomeroreductase</fullName>
        <shortName evidence="1">AHIR</shortName>
    </alternativeName>
    <alternativeName>
        <fullName evidence="1">Alpha-keto-beta-hydroxylacyl reductoisomerase</fullName>
    </alternativeName>
    <alternativeName>
        <fullName evidence="1">Ketol-acid reductoisomerase type 1</fullName>
    </alternativeName>
    <alternativeName>
        <fullName evidence="1">Ketol-acid reductoisomerase type I</fullName>
    </alternativeName>
</protein>
<dbReference type="EC" id="1.1.1.86" evidence="1"/>
<dbReference type="EMBL" id="FM242711">
    <property type="protein sequence ID" value="CAS05755.1"/>
    <property type="molecule type" value="Genomic_DNA"/>
</dbReference>
<dbReference type="RefSeq" id="WP_003727977.1">
    <property type="nucleotide sequence ID" value="NC_012488.1"/>
</dbReference>
<dbReference type="SMR" id="C1KWT0"/>
<dbReference type="GeneID" id="93235432"/>
<dbReference type="KEGG" id="lmc:Lm4b_01998"/>
<dbReference type="HOGENOM" id="CLU_033821_0_1_9"/>
<dbReference type="UniPathway" id="UPA00047">
    <property type="reaction ID" value="UER00056"/>
</dbReference>
<dbReference type="UniPathway" id="UPA00049">
    <property type="reaction ID" value="UER00060"/>
</dbReference>
<dbReference type="GO" id="GO:0005829">
    <property type="term" value="C:cytosol"/>
    <property type="evidence" value="ECO:0007669"/>
    <property type="project" value="TreeGrafter"/>
</dbReference>
<dbReference type="GO" id="GO:0004455">
    <property type="term" value="F:ketol-acid reductoisomerase activity"/>
    <property type="evidence" value="ECO:0007669"/>
    <property type="project" value="UniProtKB-UniRule"/>
</dbReference>
<dbReference type="GO" id="GO:0000287">
    <property type="term" value="F:magnesium ion binding"/>
    <property type="evidence" value="ECO:0007669"/>
    <property type="project" value="UniProtKB-UniRule"/>
</dbReference>
<dbReference type="GO" id="GO:0050661">
    <property type="term" value="F:NADP binding"/>
    <property type="evidence" value="ECO:0007669"/>
    <property type="project" value="InterPro"/>
</dbReference>
<dbReference type="GO" id="GO:0009097">
    <property type="term" value="P:isoleucine biosynthetic process"/>
    <property type="evidence" value="ECO:0007669"/>
    <property type="project" value="UniProtKB-UniRule"/>
</dbReference>
<dbReference type="GO" id="GO:0009099">
    <property type="term" value="P:L-valine biosynthetic process"/>
    <property type="evidence" value="ECO:0007669"/>
    <property type="project" value="UniProtKB-UniRule"/>
</dbReference>
<dbReference type="FunFam" id="3.40.50.720:FF:000023">
    <property type="entry name" value="Ketol-acid reductoisomerase (NADP(+))"/>
    <property type="match status" value="1"/>
</dbReference>
<dbReference type="Gene3D" id="6.10.240.10">
    <property type="match status" value="1"/>
</dbReference>
<dbReference type="Gene3D" id="3.40.50.720">
    <property type="entry name" value="NAD(P)-binding Rossmann-like Domain"/>
    <property type="match status" value="1"/>
</dbReference>
<dbReference type="HAMAP" id="MF_00435">
    <property type="entry name" value="IlvC"/>
    <property type="match status" value="1"/>
</dbReference>
<dbReference type="InterPro" id="IPR008927">
    <property type="entry name" value="6-PGluconate_DH-like_C_sf"/>
</dbReference>
<dbReference type="InterPro" id="IPR013023">
    <property type="entry name" value="KARI"/>
</dbReference>
<dbReference type="InterPro" id="IPR000506">
    <property type="entry name" value="KARI_C"/>
</dbReference>
<dbReference type="InterPro" id="IPR013116">
    <property type="entry name" value="KARI_N"/>
</dbReference>
<dbReference type="InterPro" id="IPR014359">
    <property type="entry name" value="KARI_prok"/>
</dbReference>
<dbReference type="InterPro" id="IPR036291">
    <property type="entry name" value="NAD(P)-bd_dom_sf"/>
</dbReference>
<dbReference type="NCBIfam" id="TIGR00465">
    <property type="entry name" value="ilvC"/>
    <property type="match status" value="1"/>
</dbReference>
<dbReference type="NCBIfam" id="NF004017">
    <property type="entry name" value="PRK05479.1"/>
    <property type="match status" value="1"/>
</dbReference>
<dbReference type="NCBIfam" id="NF009940">
    <property type="entry name" value="PRK13403.1"/>
    <property type="match status" value="1"/>
</dbReference>
<dbReference type="PANTHER" id="PTHR21371">
    <property type="entry name" value="KETOL-ACID REDUCTOISOMERASE, MITOCHONDRIAL"/>
    <property type="match status" value="1"/>
</dbReference>
<dbReference type="PANTHER" id="PTHR21371:SF1">
    <property type="entry name" value="KETOL-ACID REDUCTOISOMERASE, MITOCHONDRIAL"/>
    <property type="match status" value="1"/>
</dbReference>
<dbReference type="Pfam" id="PF01450">
    <property type="entry name" value="KARI_C"/>
    <property type="match status" value="1"/>
</dbReference>
<dbReference type="Pfam" id="PF07991">
    <property type="entry name" value="KARI_N"/>
    <property type="match status" value="1"/>
</dbReference>
<dbReference type="PIRSF" id="PIRSF000116">
    <property type="entry name" value="IlvC_gammaproteo"/>
    <property type="match status" value="1"/>
</dbReference>
<dbReference type="SUPFAM" id="SSF48179">
    <property type="entry name" value="6-phosphogluconate dehydrogenase C-terminal domain-like"/>
    <property type="match status" value="1"/>
</dbReference>
<dbReference type="SUPFAM" id="SSF51735">
    <property type="entry name" value="NAD(P)-binding Rossmann-fold domains"/>
    <property type="match status" value="1"/>
</dbReference>
<dbReference type="PROSITE" id="PS51851">
    <property type="entry name" value="KARI_C"/>
    <property type="match status" value="1"/>
</dbReference>
<dbReference type="PROSITE" id="PS51850">
    <property type="entry name" value="KARI_N"/>
    <property type="match status" value="1"/>
</dbReference>
<gene>
    <name evidence="1" type="primary">ilvC</name>
    <name type="ordered locus">Lm4b_01998</name>
</gene>